<sequence length="42" mass="4330">MSNVGTTGRIPLWIIGTLAGTLVIGLLAIFFYGSYVGLGSSL</sequence>
<name>PSBJ_CHAGL</name>
<protein>
    <recommendedName>
        <fullName evidence="1">Photosystem II reaction center protein J</fullName>
        <shortName evidence="1">PSII-J</shortName>
    </recommendedName>
</protein>
<keyword id="KW-0150">Chloroplast</keyword>
<keyword id="KW-0472">Membrane</keyword>
<keyword id="KW-0602">Photosynthesis</keyword>
<keyword id="KW-0604">Photosystem II</keyword>
<keyword id="KW-0934">Plastid</keyword>
<keyword id="KW-0674">Reaction center</keyword>
<keyword id="KW-0793">Thylakoid</keyword>
<keyword id="KW-0812">Transmembrane</keyword>
<keyword id="KW-1133">Transmembrane helix</keyword>
<feature type="chain" id="PRO_0000216583" description="Photosystem II reaction center protein J">
    <location>
        <begin position="1"/>
        <end position="42"/>
    </location>
</feature>
<feature type="transmembrane region" description="Helical" evidence="1">
    <location>
        <begin position="10"/>
        <end position="30"/>
    </location>
</feature>
<organism>
    <name type="scientific">Chaetosphaeridium globosum</name>
    <name type="common">Charophycean green alga</name>
    <name type="synonym">Herposteiron globosum</name>
    <dbReference type="NCBI Taxonomy" id="96477"/>
    <lineage>
        <taxon>Eukaryota</taxon>
        <taxon>Viridiplantae</taxon>
        <taxon>Streptophyta</taxon>
        <taxon>Coleochaetophyceae</taxon>
        <taxon>Coleochaetales</taxon>
        <taxon>Chaetosphaeridiaceae</taxon>
        <taxon>Chaetosphaeridium</taxon>
    </lineage>
</organism>
<geneLocation type="chloroplast"/>
<comment type="function">
    <text evidence="1">One of the components of the core complex of photosystem II (PSII). PSII is a light-driven water:plastoquinone oxidoreductase that uses light energy to abstract electrons from H(2)O, generating O(2) and a proton gradient subsequently used for ATP formation. It consists of a core antenna complex that captures photons, and an electron transfer chain that converts photonic excitation into a charge separation.</text>
</comment>
<comment type="subunit">
    <text evidence="1">PSII is composed of 1 copy each of membrane proteins PsbA, PsbB, PsbC, PsbD, PsbE, PsbF, PsbH, PsbI, PsbJ, PsbK, PsbL, PsbM, PsbT, PsbX, PsbY, PsbZ, Psb30/Ycf12, at least 3 peripheral proteins of the oxygen-evolving complex and a large number of cofactors. It forms dimeric complexes.</text>
</comment>
<comment type="subcellular location">
    <subcellularLocation>
        <location evidence="1">Plastid</location>
        <location evidence="1">Chloroplast thylakoid membrane</location>
        <topology evidence="1">Single-pass membrane protein</topology>
    </subcellularLocation>
</comment>
<comment type="similarity">
    <text evidence="1">Belongs to the PsbJ family.</text>
</comment>
<evidence type="ECO:0000255" key="1">
    <source>
        <dbReference type="HAMAP-Rule" id="MF_01305"/>
    </source>
</evidence>
<dbReference type="EMBL" id="AF494278">
    <property type="protein sequence ID" value="AAM96546.1"/>
    <property type="molecule type" value="Genomic_DNA"/>
</dbReference>
<dbReference type="RefSeq" id="NP_683818.1">
    <property type="nucleotide sequence ID" value="NC_004115.1"/>
</dbReference>
<dbReference type="SMR" id="Q8M9X0"/>
<dbReference type="GeneID" id="860702"/>
<dbReference type="GO" id="GO:0009535">
    <property type="term" value="C:chloroplast thylakoid membrane"/>
    <property type="evidence" value="ECO:0007669"/>
    <property type="project" value="UniProtKB-SubCell"/>
</dbReference>
<dbReference type="GO" id="GO:0009539">
    <property type="term" value="C:photosystem II reaction center"/>
    <property type="evidence" value="ECO:0007669"/>
    <property type="project" value="InterPro"/>
</dbReference>
<dbReference type="GO" id="GO:0015979">
    <property type="term" value="P:photosynthesis"/>
    <property type="evidence" value="ECO:0007669"/>
    <property type="project" value="UniProtKB-UniRule"/>
</dbReference>
<dbReference type="Gene3D" id="6.10.250.2070">
    <property type="match status" value="1"/>
</dbReference>
<dbReference type="HAMAP" id="MF_01305">
    <property type="entry name" value="PSII_PsbJ"/>
    <property type="match status" value="1"/>
</dbReference>
<dbReference type="InterPro" id="IPR002682">
    <property type="entry name" value="PSII_PsbJ"/>
</dbReference>
<dbReference type="InterPro" id="IPR037267">
    <property type="entry name" value="PSII_PsbJ_sf"/>
</dbReference>
<dbReference type="PANTHER" id="PTHR34812">
    <property type="entry name" value="PHOTOSYSTEM II REACTION CENTER PROTEIN J"/>
    <property type="match status" value="1"/>
</dbReference>
<dbReference type="PANTHER" id="PTHR34812:SF3">
    <property type="entry name" value="PHOTOSYSTEM II REACTION CENTER PROTEIN J"/>
    <property type="match status" value="1"/>
</dbReference>
<dbReference type="Pfam" id="PF01788">
    <property type="entry name" value="PsbJ"/>
    <property type="match status" value="1"/>
</dbReference>
<dbReference type="SUPFAM" id="SSF161021">
    <property type="entry name" value="Photosystem II reaction center protein J, PsbJ"/>
    <property type="match status" value="1"/>
</dbReference>
<accession>Q8M9X0</accession>
<gene>
    <name evidence="1" type="primary">psbJ</name>
</gene>
<proteinExistence type="inferred from homology"/>
<reference key="1">
    <citation type="journal article" date="2002" name="Proc. Natl. Acad. Sci. U.S.A.">
        <title>The chloroplast and mitochondrial genome sequences of the charophyte Chaetosphaeridium globosum: insights into the timing of the events that restructured organelle DNAs within the green algal lineage that led to land plants.</title>
        <authorList>
            <person name="Turmel M."/>
            <person name="Otis C."/>
            <person name="Lemieux C."/>
        </authorList>
    </citation>
    <scope>NUCLEOTIDE SEQUENCE [LARGE SCALE GENOMIC DNA]</scope>
    <source>
        <strain>M1311</strain>
    </source>
</reference>